<accession>B6IAI9</accession>
<keyword id="KW-0520">NAD</keyword>
<keyword id="KW-0560">Oxidoreductase</keyword>
<reference key="1">
    <citation type="journal article" date="2008" name="DNA Res.">
        <title>Complete genome sequence and comparative analysis of the wild-type commensal Escherichia coli strain SE11 isolated from a healthy adult.</title>
        <authorList>
            <person name="Oshima K."/>
            <person name="Toh H."/>
            <person name="Ogura Y."/>
            <person name="Sasamoto H."/>
            <person name="Morita H."/>
            <person name="Park S.-H."/>
            <person name="Ooka T."/>
            <person name="Iyoda S."/>
            <person name="Taylor T.D."/>
            <person name="Hayashi T."/>
            <person name="Itoh K."/>
            <person name="Hattori M."/>
        </authorList>
    </citation>
    <scope>NUCLEOTIDE SEQUENCE [LARGE SCALE GENOMIC DNA]</scope>
    <source>
        <strain>SE11</strain>
    </source>
</reference>
<dbReference type="EC" id="1.2.1.19" evidence="1"/>
<dbReference type="EC" id="1.2.1.-" evidence="1"/>
<dbReference type="EMBL" id="AP009240">
    <property type="protein sequence ID" value="BAG77050.1"/>
    <property type="molecule type" value="Genomic_DNA"/>
</dbReference>
<dbReference type="RefSeq" id="WP_001163892.1">
    <property type="nucleotide sequence ID" value="NC_011415.1"/>
</dbReference>
<dbReference type="SMR" id="B6IAI9"/>
<dbReference type="GeneID" id="75202365"/>
<dbReference type="KEGG" id="ecy:ECSE_1526"/>
<dbReference type="HOGENOM" id="CLU_005391_1_0_6"/>
<dbReference type="UniPathway" id="UPA00188">
    <property type="reaction ID" value="UER00292"/>
</dbReference>
<dbReference type="Proteomes" id="UP000008199">
    <property type="component" value="Chromosome"/>
</dbReference>
<dbReference type="GO" id="GO:0019145">
    <property type="term" value="F:aminobutyraldehyde dehydrogenase (NAD+) activity"/>
    <property type="evidence" value="ECO:0007669"/>
    <property type="project" value="UniProtKB-UniRule"/>
</dbReference>
<dbReference type="GO" id="GO:0051287">
    <property type="term" value="F:NAD binding"/>
    <property type="evidence" value="ECO:0007669"/>
    <property type="project" value="UniProtKB-UniRule"/>
</dbReference>
<dbReference type="GO" id="GO:0019477">
    <property type="term" value="P:L-lysine catabolic process"/>
    <property type="evidence" value="ECO:0007669"/>
    <property type="project" value="UniProtKB-UniRule"/>
</dbReference>
<dbReference type="GO" id="GO:0009447">
    <property type="term" value="P:putrescine catabolic process"/>
    <property type="evidence" value="ECO:0007669"/>
    <property type="project" value="UniProtKB-UniRule"/>
</dbReference>
<dbReference type="CDD" id="cd07092">
    <property type="entry name" value="ALDH_ABALDH-YdcW"/>
    <property type="match status" value="1"/>
</dbReference>
<dbReference type="FunFam" id="3.40.605.10:FF:000001">
    <property type="entry name" value="Aldehyde dehydrogenase 1"/>
    <property type="match status" value="1"/>
</dbReference>
<dbReference type="FunFam" id="3.40.309.10:FF:000010">
    <property type="entry name" value="Gamma-aminobutyraldehyde dehydrogenase"/>
    <property type="match status" value="1"/>
</dbReference>
<dbReference type="Gene3D" id="3.40.605.10">
    <property type="entry name" value="Aldehyde Dehydrogenase, Chain A, domain 1"/>
    <property type="match status" value="1"/>
</dbReference>
<dbReference type="Gene3D" id="3.40.309.10">
    <property type="entry name" value="Aldehyde Dehydrogenase, Chain A, domain 2"/>
    <property type="match status" value="1"/>
</dbReference>
<dbReference type="HAMAP" id="MF_01275">
    <property type="entry name" value="Aldedh_Prr"/>
    <property type="match status" value="1"/>
</dbReference>
<dbReference type="InterPro" id="IPR016161">
    <property type="entry name" value="Ald_DH/histidinol_DH"/>
</dbReference>
<dbReference type="InterPro" id="IPR016163">
    <property type="entry name" value="Ald_DH_C"/>
</dbReference>
<dbReference type="InterPro" id="IPR029510">
    <property type="entry name" value="Ald_DH_CS_GLU"/>
</dbReference>
<dbReference type="InterPro" id="IPR016162">
    <property type="entry name" value="Ald_DH_N"/>
</dbReference>
<dbReference type="InterPro" id="IPR015590">
    <property type="entry name" value="Aldehyde_DH_dom"/>
</dbReference>
<dbReference type="InterPro" id="IPR015657">
    <property type="entry name" value="Aminobutyraldehyde_DH"/>
</dbReference>
<dbReference type="InterPro" id="IPR017749">
    <property type="entry name" value="PatD"/>
</dbReference>
<dbReference type="NCBIfam" id="TIGR03374">
    <property type="entry name" value="ABALDH"/>
    <property type="match status" value="1"/>
</dbReference>
<dbReference type="NCBIfam" id="NF010000">
    <property type="entry name" value="PRK13473.1"/>
    <property type="match status" value="1"/>
</dbReference>
<dbReference type="PANTHER" id="PTHR11699">
    <property type="entry name" value="ALDEHYDE DEHYDROGENASE-RELATED"/>
    <property type="match status" value="1"/>
</dbReference>
<dbReference type="Pfam" id="PF00171">
    <property type="entry name" value="Aldedh"/>
    <property type="match status" value="1"/>
</dbReference>
<dbReference type="SUPFAM" id="SSF53720">
    <property type="entry name" value="ALDH-like"/>
    <property type="match status" value="1"/>
</dbReference>
<dbReference type="PROSITE" id="PS00687">
    <property type="entry name" value="ALDEHYDE_DEHYDR_GLU"/>
    <property type="match status" value="1"/>
</dbReference>
<evidence type="ECO:0000255" key="1">
    <source>
        <dbReference type="HAMAP-Rule" id="MF_01275"/>
    </source>
</evidence>
<proteinExistence type="inferred from homology"/>
<name>ABDH_ECOSE</name>
<organism>
    <name type="scientific">Escherichia coli (strain SE11)</name>
    <dbReference type="NCBI Taxonomy" id="409438"/>
    <lineage>
        <taxon>Bacteria</taxon>
        <taxon>Pseudomonadati</taxon>
        <taxon>Pseudomonadota</taxon>
        <taxon>Gammaproteobacteria</taxon>
        <taxon>Enterobacterales</taxon>
        <taxon>Enterobacteriaceae</taxon>
        <taxon>Escherichia</taxon>
    </lineage>
</organism>
<feature type="chain" id="PRO_1000140273" description="Gamma-aminobutyraldehyde dehydrogenase">
    <location>
        <begin position="1"/>
        <end position="474"/>
    </location>
</feature>
<feature type="active site" evidence="1">
    <location>
        <position position="246"/>
    </location>
</feature>
<feature type="active site" description="Nucleophile" evidence="1">
    <location>
        <position position="280"/>
    </location>
</feature>
<feature type="binding site" evidence="1">
    <location>
        <begin position="146"/>
        <end position="148"/>
    </location>
    <ligand>
        <name>NAD(+)</name>
        <dbReference type="ChEBI" id="CHEBI:57540"/>
    </ligand>
</feature>
<feature type="binding site" evidence="1">
    <location>
        <begin position="172"/>
        <end position="175"/>
    </location>
    <ligand>
        <name>NAD(+)</name>
        <dbReference type="ChEBI" id="CHEBI:57540"/>
    </ligand>
</feature>
<feature type="binding site" evidence="1">
    <location>
        <position position="209"/>
    </location>
    <ligand>
        <name>NAD(+)</name>
        <dbReference type="ChEBI" id="CHEBI:57540"/>
    </ligand>
</feature>
<feature type="binding site" evidence="1">
    <location>
        <begin position="225"/>
        <end position="228"/>
    </location>
    <ligand>
        <name>NAD(+)</name>
        <dbReference type="ChEBI" id="CHEBI:57540"/>
    </ligand>
</feature>
<feature type="binding site" evidence="1">
    <location>
        <position position="280"/>
    </location>
    <ligand>
        <name>NAD(+)</name>
        <dbReference type="ChEBI" id="CHEBI:57540"/>
    </ligand>
</feature>
<gene>
    <name evidence="1" type="primary">patD</name>
    <name type="ordered locus">ECSE_1526</name>
</gene>
<sequence>MQHKLLINGELVSGEGEKQPVYNPATGDVLLEIAEASAEQVDAAVRAADAAFAEWGQTTPKVRAECLLKLADVIEENGQVFAELESRNCGKPLHSAFNDEIPAIVDVFRFFAGAARCLNGLAAGEYLEGHTSMIRRDPLGVVASIAPWNYPLMMAAWKLAPALAAGNCVVLKPSEITPLTALKLAELAKDIFPAGVINVLFGRGKTVGDPLTGHPKVRMVSLTGSIATGEHIISHTASSIKRTHMELGGKAPVIVFDDADIEAVVEGVRTFGYYNAGQDCTAACRIYAQKGIYDTLVEKLGAAVATLKSGAPDDESTELGPLSSLAHLERVSKAVEEAKATGHIKVITGGEKRKGNGYYYAPTLLAGALQDDAIVQKEVFGPVVSVTPFDNEEQVVNWANDSQYGLASSVWTKDVGRAHRVSARLQYGCTWVNTHFMLVSEMPHGGQKLSGYGKDMSLYGLEDYTVVRHVMVKH</sequence>
<comment type="function">
    <text evidence="1">Catalyzes the oxidation 4-aminobutanal (gamma-aminobutyraldehyde) to 4-aminobutanoate (gamma-aminobutyrate or GABA). This is the second step in one of two pathways for putrescine degradation, where putrescine is converted into 4-aminobutanoate via 4-aminobutanal. Also functions as a 5-aminopentanal dehydrogenase in a a L-lysine degradation pathway to succinate that proceeds via cadaverine, glutarate and L-2-hydroxyglutarate.</text>
</comment>
<comment type="catalytic activity">
    <reaction evidence="1">
        <text>4-aminobutanal + NAD(+) + H2O = 4-aminobutanoate + NADH + 2 H(+)</text>
        <dbReference type="Rhea" id="RHEA:19105"/>
        <dbReference type="ChEBI" id="CHEBI:15377"/>
        <dbReference type="ChEBI" id="CHEBI:15378"/>
        <dbReference type="ChEBI" id="CHEBI:57540"/>
        <dbReference type="ChEBI" id="CHEBI:57945"/>
        <dbReference type="ChEBI" id="CHEBI:58264"/>
        <dbReference type="ChEBI" id="CHEBI:59888"/>
        <dbReference type="EC" id="1.2.1.19"/>
    </reaction>
    <physiologicalReaction direction="left-to-right" evidence="1">
        <dbReference type="Rhea" id="RHEA:19106"/>
    </physiologicalReaction>
</comment>
<comment type="catalytic activity">
    <reaction evidence="1">
        <text>5-aminopentanal + NAD(+) + H2O = 5-aminopentanoate + NADH + 2 H(+)</text>
        <dbReference type="Rhea" id="RHEA:61632"/>
        <dbReference type="ChEBI" id="CHEBI:15377"/>
        <dbReference type="ChEBI" id="CHEBI:15378"/>
        <dbReference type="ChEBI" id="CHEBI:57540"/>
        <dbReference type="ChEBI" id="CHEBI:57945"/>
        <dbReference type="ChEBI" id="CHEBI:144896"/>
        <dbReference type="ChEBI" id="CHEBI:356010"/>
    </reaction>
    <physiologicalReaction direction="left-to-right" evidence="1">
        <dbReference type="Rhea" id="RHEA:61633"/>
    </physiologicalReaction>
</comment>
<comment type="pathway">
    <text evidence="1">Amine and polyamine degradation; putrescine degradation; 4-aminobutanoate from 4-aminobutanal: step 1/1.</text>
</comment>
<comment type="pathway">
    <text evidence="1">Amino-acid degradation.</text>
</comment>
<comment type="subunit">
    <text evidence="1">Homotetramer.</text>
</comment>
<comment type="miscellaneous">
    <text evidence="1">4-aminobutanal can spontaneously cyclize to 1-pyrroline, and 5-aminopentanal to 1-piperideine.</text>
</comment>
<comment type="similarity">
    <text evidence="1">Belongs to the aldehyde dehydrogenase family. Gamma-aminobutyraldehyde dehydrogenase subfamily.</text>
</comment>
<protein>
    <recommendedName>
        <fullName evidence="1">Gamma-aminobutyraldehyde dehydrogenase</fullName>
        <shortName evidence="1">ABALDH</shortName>
        <ecNumber evidence="1">1.2.1.19</ecNumber>
    </recommendedName>
    <alternativeName>
        <fullName evidence="1">1-pyrroline dehydrogenase</fullName>
    </alternativeName>
    <alternativeName>
        <fullName evidence="1">4-aminobutanal dehydrogenase</fullName>
    </alternativeName>
    <alternativeName>
        <fullName evidence="1">5-aminopentanal dehydrogenase</fullName>
        <ecNumber evidence="1">1.2.1.-</ecNumber>
    </alternativeName>
</protein>